<feature type="chain" id="PRO_1000149527" description="2,3-bisphosphoglycerate-dependent phosphoglycerate mutase">
    <location>
        <begin position="1"/>
        <end position="211"/>
    </location>
</feature>
<feature type="active site" description="Tele-phosphohistidine intermediate" evidence="1">
    <location>
        <position position="10"/>
    </location>
</feature>
<feature type="active site" description="Proton donor/acceptor" evidence="1">
    <location>
        <position position="88"/>
    </location>
</feature>
<feature type="binding site" evidence="1">
    <location>
        <begin position="9"/>
        <end position="16"/>
    </location>
    <ligand>
        <name>substrate</name>
    </ligand>
</feature>
<feature type="binding site" evidence="1">
    <location>
        <begin position="22"/>
        <end position="23"/>
    </location>
    <ligand>
        <name>substrate</name>
    </ligand>
</feature>
<feature type="binding site" evidence="1">
    <location>
        <position position="61"/>
    </location>
    <ligand>
        <name>substrate</name>
    </ligand>
</feature>
<feature type="binding site" evidence="1">
    <location>
        <begin position="88"/>
        <end position="91"/>
    </location>
    <ligand>
        <name>substrate</name>
    </ligand>
</feature>
<feature type="binding site" evidence="1">
    <location>
        <position position="99"/>
    </location>
    <ligand>
        <name>substrate</name>
    </ligand>
</feature>
<feature type="binding site" evidence="1">
    <location>
        <begin position="115"/>
        <end position="116"/>
    </location>
    <ligand>
        <name>substrate</name>
    </ligand>
</feature>
<feature type="binding site" evidence="1">
    <location>
        <begin position="159"/>
        <end position="160"/>
    </location>
    <ligand>
        <name>substrate</name>
    </ligand>
</feature>
<feature type="site" description="Transition state stabilizer" evidence="1">
    <location>
        <position position="158"/>
    </location>
</feature>
<organism>
    <name type="scientific">Sinorhizobium fredii (strain NBRC 101917 / NGR234)</name>
    <dbReference type="NCBI Taxonomy" id="394"/>
    <lineage>
        <taxon>Bacteria</taxon>
        <taxon>Pseudomonadati</taxon>
        <taxon>Pseudomonadota</taxon>
        <taxon>Alphaproteobacteria</taxon>
        <taxon>Hyphomicrobiales</taxon>
        <taxon>Rhizobiaceae</taxon>
        <taxon>Sinorhizobium/Ensifer group</taxon>
        <taxon>Sinorhizobium</taxon>
    </lineage>
</organism>
<comment type="function">
    <text evidence="1">Catalyzes the interconversion of 2-phosphoglycerate and 3-phosphoglycerate.</text>
</comment>
<comment type="catalytic activity">
    <reaction evidence="1">
        <text>(2R)-2-phosphoglycerate = (2R)-3-phosphoglycerate</text>
        <dbReference type="Rhea" id="RHEA:15901"/>
        <dbReference type="ChEBI" id="CHEBI:58272"/>
        <dbReference type="ChEBI" id="CHEBI:58289"/>
        <dbReference type="EC" id="5.4.2.11"/>
    </reaction>
</comment>
<comment type="pathway">
    <text evidence="1">Carbohydrate degradation; glycolysis; pyruvate from D-glyceraldehyde 3-phosphate: step 3/5.</text>
</comment>
<comment type="subunit">
    <text evidence="1">Homodimer.</text>
</comment>
<comment type="similarity">
    <text evidence="1">Belongs to the phosphoglycerate mutase family. BPG-dependent PGAM subfamily.</text>
</comment>
<keyword id="KW-0312">Gluconeogenesis</keyword>
<keyword id="KW-0324">Glycolysis</keyword>
<keyword id="KW-0413">Isomerase</keyword>
<keyword id="KW-1185">Reference proteome</keyword>
<proteinExistence type="inferred from homology"/>
<protein>
    <recommendedName>
        <fullName evidence="1">2,3-bisphosphoglycerate-dependent phosphoglycerate mutase</fullName>
        <shortName evidence="1">BPG-dependent PGAM</shortName>
        <shortName evidence="1">PGAM</shortName>
        <shortName evidence="1">Phosphoglyceromutase</shortName>
        <shortName evidence="1">dPGM</shortName>
        <ecNumber evidence="1">5.4.2.11</ecNumber>
    </recommendedName>
</protein>
<accession>C3MBY8</accession>
<reference key="1">
    <citation type="journal article" date="2009" name="Appl. Environ. Microbiol.">
        <title>Rhizobium sp. strain NGR234 possesses a remarkable number of secretion systems.</title>
        <authorList>
            <person name="Schmeisser C."/>
            <person name="Liesegang H."/>
            <person name="Krysciak D."/>
            <person name="Bakkou N."/>
            <person name="Le Quere A."/>
            <person name="Wollherr A."/>
            <person name="Heinemeyer I."/>
            <person name="Morgenstern B."/>
            <person name="Pommerening-Roeser A."/>
            <person name="Flores M."/>
            <person name="Palacios R."/>
            <person name="Brenner S."/>
            <person name="Gottschalk G."/>
            <person name="Schmitz R.A."/>
            <person name="Broughton W.J."/>
            <person name="Perret X."/>
            <person name="Strittmatter A.W."/>
            <person name="Streit W.R."/>
        </authorList>
    </citation>
    <scope>NUCLEOTIDE SEQUENCE [LARGE SCALE GENOMIC DNA]</scope>
    <source>
        <strain>NBRC 101917 / NGR234</strain>
    </source>
</reference>
<evidence type="ECO:0000255" key="1">
    <source>
        <dbReference type="HAMAP-Rule" id="MF_01039"/>
    </source>
</evidence>
<dbReference type="EC" id="5.4.2.11" evidence="1"/>
<dbReference type="EMBL" id="CP001389">
    <property type="protein sequence ID" value="ACP27213.1"/>
    <property type="molecule type" value="Genomic_DNA"/>
</dbReference>
<dbReference type="RefSeq" id="WP_012709959.1">
    <property type="nucleotide sequence ID" value="NC_012587.1"/>
</dbReference>
<dbReference type="RefSeq" id="YP_002827966.1">
    <property type="nucleotide sequence ID" value="NC_012587.1"/>
</dbReference>
<dbReference type="SMR" id="C3MBY8"/>
<dbReference type="STRING" id="394.NGR_c34890"/>
<dbReference type="KEGG" id="rhi:NGR_c34890"/>
<dbReference type="PATRIC" id="fig|394.7.peg.6337"/>
<dbReference type="eggNOG" id="COG0588">
    <property type="taxonomic scope" value="Bacteria"/>
</dbReference>
<dbReference type="HOGENOM" id="CLU_033323_1_4_5"/>
<dbReference type="OrthoDB" id="9781415at2"/>
<dbReference type="UniPathway" id="UPA00109">
    <property type="reaction ID" value="UER00186"/>
</dbReference>
<dbReference type="Proteomes" id="UP000001054">
    <property type="component" value="Chromosome"/>
</dbReference>
<dbReference type="GO" id="GO:0004619">
    <property type="term" value="F:phosphoglycerate mutase activity"/>
    <property type="evidence" value="ECO:0007669"/>
    <property type="project" value="UniProtKB-EC"/>
</dbReference>
<dbReference type="GO" id="GO:0006094">
    <property type="term" value="P:gluconeogenesis"/>
    <property type="evidence" value="ECO:0007669"/>
    <property type="project" value="UniProtKB-UniRule"/>
</dbReference>
<dbReference type="GO" id="GO:0006096">
    <property type="term" value="P:glycolytic process"/>
    <property type="evidence" value="ECO:0007669"/>
    <property type="project" value="UniProtKB-UniRule"/>
</dbReference>
<dbReference type="CDD" id="cd07067">
    <property type="entry name" value="HP_PGM_like"/>
    <property type="match status" value="1"/>
</dbReference>
<dbReference type="Gene3D" id="3.40.50.1240">
    <property type="entry name" value="Phosphoglycerate mutase-like"/>
    <property type="match status" value="1"/>
</dbReference>
<dbReference type="HAMAP" id="MF_01039">
    <property type="entry name" value="PGAM_GpmA"/>
    <property type="match status" value="1"/>
</dbReference>
<dbReference type="InterPro" id="IPR013078">
    <property type="entry name" value="His_Pase_superF_clade-1"/>
</dbReference>
<dbReference type="InterPro" id="IPR029033">
    <property type="entry name" value="His_PPase_superfam"/>
</dbReference>
<dbReference type="InterPro" id="IPR001345">
    <property type="entry name" value="PG/BPGM_mutase_AS"/>
</dbReference>
<dbReference type="InterPro" id="IPR005952">
    <property type="entry name" value="Phosphogly_mut1"/>
</dbReference>
<dbReference type="NCBIfam" id="TIGR01258">
    <property type="entry name" value="pgm_1"/>
    <property type="match status" value="2"/>
</dbReference>
<dbReference type="NCBIfam" id="NF002339">
    <property type="entry name" value="PRK01295.1"/>
    <property type="match status" value="1"/>
</dbReference>
<dbReference type="PANTHER" id="PTHR11931">
    <property type="entry name" value="PHOSPHOGLYCERATE MUTASE"/>
    <property type="match status" value="1"/>
</dbReference>
<dbReference type="Pfam" id="PF00300">
    <property type="entry name" value="His_Phos_1"/>
    <property type="match status" value="1"/>
</dbReference>
<dbReference type="PIRSF" id="PIRSF000709">
    <property type="entry name" value="6PFK_2-Ptase"/>
    <property type="match status" value="1"/>
</dbReference>
<dbReference type="SMART" id="SM00855">
    <property type="entry name" value="PGAM"/>
    <property type="match status" value="1"/>
</dbReference>
<dbReference type="SUPFAM" id="SSF53254">
    <property type="entry name" value="Phosphoglycerate mutase-like"/>
    <property type="match status" value="1"/>
</dbReference>
<dbReference type="PROSITE" id="PS00175">
    <property type="entry name" value="PG_MUTASE"/>
    <property type="match status" value="1"/>
</dbReference>
<sequence>MSGTLVLVRHGQSEWNLKNLFTGWRDPDLTELGVEEAKAGGAALAEYGIKFDIAFTSVLVRAQRTCQMVLDAVGQSSLETICDQALNERDYGDLSGLNKDDARAKWGEEQVHIWRRSYDVPPPGGESLRDTGARVWPYYLTEILPRVLAGEKVLVAAHGNSLRSLVMVLDRLTKEQVLNLNLATGVPMVYKLKADSTVASKEVLGDMSAAH</sequence>
<gene>
    <name evidence="1" type="primary">gpmA</name>
    <name type="ordered locus">NGR_c34890</name>
</gene>
<name>GPMA_SINFN</name>